<sequence length="187" mass="21035">MTGPPRLSSDLDALLRRVAGHDQAAFAEFYDHTKSRVYGLVMRVLRDTGYSEETTQEIYLEVWRNASEFDSAKGSALAWLLTMAHRRAVDRVRCEQAGNQREVRYGAANVDPASDVVADLAIAGDERRRVTECLKALTDTQRQCIELAYYGGLTYVEVSRRLAANLSTIKSRMRDALRSLRNCLDVS</sequence>
<evidence type="ECO:0000250" key="1"/>
<evidence type="ECO:0000269" key="2">
    <source>
    </source>
</evidence>
<evidence type="ECO:0000269" key="3">
    <source>
    </source>
</evidence>
<evidence type="ECO:0000269" key="4">
    <source ref="5"/>
</evidence>
<evidence type="ECO:0000305" key="5"/>
<evidence type="ECO:0007829" key="6">
    <source>
        <dbReference type="PDB" id="4NQW"/>
    </source>
</evidence>
<name>SIGK_MYCTU</name>
<feature type="chain" id="PRO_0000313845" description="ECF RNA polymerase sigma factor SigK">
    <location>
        <begin position="1"/>
        <end position="187"/>
    </location>
</feature>
<feature type="DNA-binding region" description="H-T-H motif" evidence="1">
    <location>
        <begin position="155"/>
        <end position="174"/>
    </location>
</feature>
<feature type="region of interest" description="Sigma-70 factor domain-2">
    <location>
        <begin position="30"/>
        <end position="96"/>
    </location>
</feature>
<feature type="region of interest" description="Sigma-70 factor domain-4">
    <location>
        <begin position="133"/>
        <end position="182"/>
    </location>
</feature>
<feature type="short sequence motif" description="Interaction with polymerase core subunit RpoC">
    <location>
        <begin position="53"/>
        <end position="56"/>
    </location>
</feature>
<feature type="helix" evidence="6">
    <location>
        <begin position="11"/>
        <end position="17"/>
    </location>
</feature>
<feature type="helix" evidence="6">
    <location>
        <begin position="25"/>
        <end position="45"/>
    </location>
</feature>
<feature type="helix" evidence="6">
    <location>
        <begin position="48"/>
        <end position="65"/>
    </location>
</feature>
<feature type="helix" evidence="6">
    <location>
        <begin position="66"/>
        <end position="68"/>
    </location>
</feature>
<feature type="turn" evidence="6">
    <location>
        <begin position="71"/>
        <end position="73"/>
    </location>
</feature>
<feature type="helix" evidence="6">
    <location>
        <begin position="76"/>
        <end position="94"/>
    </location>
</feature>
<feature type="helix" evidence="6">
    <location>
        <begin position="124"/>
        <end position="136"/>
    </location>
</feature>
<feature type="helix" evidence="6">
    <location>
        <begin position="139"/>
        <end position="148"/>
    </location>
</feature>
<feature type="turn" evidence="6">
    <location>
        <begin position="149"/>
        <end position="151"/>
    </location>
</feature>
<feature type="helix" evidence="6">
    <location>
        <begin position="155"/>
        <end position="161"/>
    </location>
</feature>
<feature type="helix" evidence="6">
    <location>
        <begin position="166"/>
        <end position="184"/>
    </location>
</feature>
<organism>
    <name type="scientific">Mycobacterium tuberculosis (strain ATCC 25618 / H37Rv)</name>
    <dbReference type="NCBI Taxonomy" id="83332"/>
    <lineage>
        <taxon>Bacteria</taxon>
        <taxon>Bacillati</taxon>
        <taxon>Actinomycetota</taxon>
        <taxon>Actinomycetes</taxon>
        <taxon>Mycobacteriales</taxon>
        <taxon>Mycobacteriaceae</taxon>
        <taxon>Mycobacterium</taxon>
        <taxon>Mycobacterium tuberculosis complex</taxon>
    </lineage>
</organism>
<gene>
    <name type="primary">sigK</name>
    <name type="ordered locus">Rv0445c</name>
</gene>
<protein>
    <recommendedName>
        <fullName>ECF RNA polymerase sigma factor SigK</fullName>
        <shortName>ECF sigma factor SigK</shortName>
    </recommendedName>
    <alternativeName>
        <fullName>Alternative RNA polymerase sigma factor SigK</fullName>
    </alternativeName>
    <alternativeName>
        <fullName>RNA polymerase sigma-K factor</fullName>
        <shortName>Sigma-K factor</shortName>
    </alternativeName>
</protein>
<comment type="function">
    <text evidence="2">Sigma factors are initiation factors that promote the attachment of RNA polymerase to specific initiation sites and are then released. Extracytoplasmic function (ECF) sigma factors are held in an inactive form by an anti-sigma factor until released by regulated intramembrane proteolysis. Sigma-K controls genes such as mpt70 and mpt83.</text>
</comment>
<comment type="subunit">
    <text evidence="3 4">Interacts transiently with the RNA polymerase catalytic core formed by RpoA, RpoB, RpoC and RpoZ (2 alpha, 1 beta, 1 beta' and 1 omega subunit) to form the RNA polymerase holoenzyme that can initiate transcription. Interacts (via sigma-70 factor domain 4) with anti-sigma-K factor RskA.</text>
</comment>
<comment type="induction">
    <text evidence="2">Autoregulated.</text>
</comment>
<comment type="domain">
    <text evidence="1">The sigma-70 factor domain-2 mediates sequence-specific interaction with the -10 element in promoter DNA, and plays an important role in melting the double-stranded DNA and the formation of the transcription bubble. The sigma-70 factor domain-2 mediates interaction with the RNA polymerase subunits RpoB and RpoC (By similarity).</text>
</comment>
<comment type="domain">
    <text evidence="1">The sigma-70 factor domain-4 contains a helix-turn-helix (H-T-H) motif that mediates interaction with the -35 element in promoter DNA. The domain also mediates interaction with the RNA polymerase subunit RpoA. Interactions between sigma-70 factor domain-4 and anti-sigma factors prevents interaction of sigma factors with the RNA polymerase catalytic core (By similarity).</text>
</comment>
<comment type="miscellaneous">
    <text evidence="5">Extracytoplasmic function (ECF) sigma factors are held in an inactive form by an anti-sigma factor until released by regulated intramembrane proteolysis (RIP). RIP occurs when an extracytoplasmic signal triggers a concerted proteolytic cascade to transmit information and elicit cellular responses. The membrane-spanning anti-sigma factor is first cut extracytoplasmically (site-1 protease, S1P), then within the membrane itself (site-2 protease, S2P, Rip1), while cytoplasmic proteases finish degrading the regulatory protein, liberating SigK (Probable).</text>
</comment>
<comment type="similarity">
    <text evidence="5">Belongs to the sigma-70 factor family. ECF subfamily.</text>
</comment>
<dbReference type="EMBL" id="AL123456">
    <property type="protein sequence ID" value="CCP43176.1"/>
    <property type="molecule type" value="Genomic_DNA"/>
</dbReference>
<dbReference type="PIR" id="F70830">
    <property type="entry name" value="F70830"/>
</dbReference>
<dbReference type="RefSeq" id="NP_214959.1">
    <property type="nucleotide sequence ID" value="NC_000962.3"/>
</dbReference>
<dbReference type="RefSeq" id="WP_003402246.1">
    <property type="nucleotide sequence ID" value="NZ_NVQJ01000002.1"/>
</dbReference>
<dbReference type="PDB" id="4NQW">
    <property type="method" value="X-ray"/>
    <property type="resolution" value="2.40 A"/>
    <property type="chains" value="A=1-187"/>
</dbReference>
<dbReference type="PDBsum" id="4NQW"/>
<dbReference type="SMR" id="P9WGH7"/>
<dbReference type="STRING" id="83332.Rv0445c"/>
<dbReference type="PaxDb" id="83332-Rv0445c"/>
<dbReference type="DNASU" id="886334"/>
<dbReference type="GeneID" id="886334"/>
<dbReference type="KEGG" id="mtu:Rv0445c"/>
<dbReference type="KEGG" id="mtv:RVBD_0445c"/>
<dbReference type="TubercuList" id="Rv0445c"/>
<dbReference type="eggNOG" id="COG1595">
    <property type="taxonomic scope" value="Bacteria"/>
</dbReference>
<dbReference type="InParanoid" id="P9WGH7"/>
<dbReference type="OrthoDB" id="9784272at2"/>
<dbReference type="PhylomeDB" id="P9WGH7"/>
<dbReference type="EvolutionaryTrace" id="P9WGH7"/>
<dbReference type="Proteomes" id="UP000001584">
    <property type="component" value="Chromosome"/>
</dbReference>
<dbReference type="GO" id="GO:0009274">
    <property type="term" value="C:peptidoglycan-based cell wall"/>
    <property type="evidence" value="ECO:0007005"/>
    <property type="project" value="MTBBASE"/>
</dbReference>
<dbReference type="GO" id="GO:0005886">
    <property type="term" value="C:plasma membrane"/>
    <property type="evidence" value="ECO:0007005"/>
    <property type="project" value="MTBBASE"/>
</dbReference>
<dbReference type="GO" id="GO:0003677">
    <property type="term" value="F:DNA binding"/>
    <property type="evidence" value="ECO:0007669"/>
    <property type="project" value="UniProtKB-KW"/>
</dbReference>
<dbReference type="GO" id="GO:0016987">
    <property type="term" value="F:sigma factor activity"/>
    <property type="evidence" value="ECO:0000318"/>
    <property type="project" value="GO_Central"/>
</dbReference>
<dbReference type="GO" id="GO:0006352">
    <property type="term" value="P:DNA-templated transcription initiation"/>
    <property type="evidence" value="ECO:0007669"/>
    <property type="project" value="InterPro"/>
</dbReference>
<dbReference type="GO" id="GO:0006355">
    <property type="term" value="P:regulation of DNA-templated transcription"/>
    <property type="evidence" value="ECO:0000318"/>
    <property type="project" value="GO_Central"/>
</dbReference>
<dbReference type="CDD" id="cd06171">
    <property type="entry name" value="Sigma70_r4"/>
    <property type="match status" value="1"/>
</dbReference>
<dbReference type="FunFam" id="1.10.1740.10:FF:000021">
    <property type="entry name" value="ECF RNA polymerase sigma factor SigK"/>
    <property type="match status" value="1"/>
</dbReference>
<dbReference type="Gene3D" id="1.10.1740.10">
    <property type="match status" value="1"/>
</dbReference>
<dbReference type="Gene3D" id="1.10.10.10">
    <property type="entry name" value="Winged helix-like DNA-binding domain superfamily/Winged helix DNA-binding domain"/>
    <property type="match status" value="1"/>
</dbReference>
<dbReference type="InterPro" id="IPR039425">
    <property type="entry name" value="RNA_pol_sigma-70-like"/>
</dbReference>
<dbReference type="InterPro" id="IPR014284">
    <property type="entry name" value="RNA_pol_sigma-70_dom"/>
</dbReference>
<dbReference type="InterPro" id="IPR007627">
    <property type="entry name" value="RNA_pol_sigma70_r2"/>
</dbReference>
<dbReference type="InterPro" id="IPR007630">
    <property type="entry name" value="RNA_pol_sigma70_r4"/>
</dbReference>
<dbReference type="InterPro" id="IPR013325">
    <property type="entry name" value="RNA_pol_sigma_r2"/>
</dbReference>
<dbReference type="InterPro" id="IPR013324">
    <property type="entry name" value="RNA_pol_sigma_r3/r4-like"/>
</dbReference>
<dbReference type="InterPro" id="IPR036388">
    <property type="entry name" value="WH-like_DNA-bd_sf"/>
</dbReference>
<dbReference type="NCBIfam" id="NF007228">
    <property type="entry name" value="PRK09646.1"/>
    <property type="match status" value="1"/>
</dbReference>
<dbReference type="NCBIfam" id="TIGR02937">
    <property type="entry name" value="sigma70-ECF"/>
    <property type="match status" value="1"/>
</dbReference>
<dbReference type="PANTHER" id="PTHR43133:SF66">
    <property type="entry name" value="ECF RNA POLYMERASE SIGMA FACTOR SIGK"/>
    <property type="match status" value="1"/>
</dbReference>
<dbReference type="PANTHER" id="PTHR43133">
    <property type="entry name" value="RNA POLYMERASE ECF-TYPE SIGMA FACTO"/>
    <property type="match status" value="1"/>
</dbReference>
<dbReference type="Pfam" id="PF04542">
    <property type="entry name" value="Sigma70_r2"/>
    <property type="match status" value="1"/>
</dbReference>
<dbReference type="Pfam" id="PF04545">
    <property type="entry name" value="Sigma70_r4"/>
    <property type="match status" value="1"/>
</dbReference>
<dbReference type="SUPFAM" id="SSF88946">
    <property type="entry name" value="Sigma2 domain of RNA polymerase sigma factors"/>
    <property type="match status" value="1"/>
</dbReference>
<dbReference type="SUPFAM" id="SSF88659">
    <property type="entry name" value="Sigma3 and sigma4 domains of RNA polymerase sigma factors"/>
    <property type="match status" value="1"/>
</dbReference>
<reference key="1">
    <citation type="journal article" date="1998" name="Nature">
        <title>Deciphering the biology of Mycobacterium tuberculosis from the complete genome sequence.</title>
        <authorList>
            <person name="Cole S.T."/>
            <person name="Brosch R."/>
            <person name="Parkhill J."/>
            <person name="Garnier T."/>
            <person name="Churcher C.M."/>
            <person name="Harris D.E."/>
            <person name="Gordon S.V."/>
            <person name="Eiglmeier K."/>
            <person name="Gas S."/>
            <person name="Barry C.E. III"/>
            <person name="Tekaia F."/>
            <person name="Badcock K."/>
            <person name="Basham D."/>
            <person name="Brown D."/>
            <person name="Chillingworth T."/>
            <person name="Connor R."/>
            <person name="Davies R.M."/>
            <person name="Devlin K."/>
            <person name="Feltwell T."/>
            <person name="Gentles S."/>
            <person name="Hamlin N."/>
            <person name="Holroyd S."/>
            <person name="Hornsby T."/>
            <person name="Jagels K."/>
            <person name="Krogh A."/>
            <person name="McLean J."/>
            <person name="Moule S."/>
            <person name="Murphy L.D."/>
            <person name="Oliver S."/>
            <person name="Osborne J."/>
            <person name="Quail M.A."/>
            <person name="Rajandream M.A."/>
            <person name="Rogers J."/>
            <person name="Rutter S."/>
            <person name="Seeger K."/>
            <person name="Skelton S."/>
            <person name="Squares S."/>
            <person name="Squares R."/>
            <person name="Sulston J.E."/>
            <person name="Taylor K."/>
            <person name="Whitehead S."/>
            <person name="Barrell B.G."/>
        </authorList>
    </citation>
    <scope>NUCLEOTIDE SEQUENCE [LARGE SCALE GENOMIC DNA]</scope>
    <source>
        <strain>ATCC 25618 / H37Rv</strain>
    </source>
</reference>
<reference key="2">
    <citation type="journal article" date="2005" name="Mol. Microbiol.">
        <title>Reduced expression of antigenic proteins MPB70 and MPB83 in Mycobacterium bovis BCG strains due to a start codon mutation in sigK.</title>
        <authorList>
            <person name="Charlet D."/>
            <person name="Mostowy S."/>
            <person name="Alexander D."/>
            <person name="Sit L."/>
            <person name="Wiker H.G."/>
            <person name="Behr M.A."/>
        </authorList>
    </citation>
    <scope>FUNCTION AS A SIGMA-FACTOR</scope>
    <scope>INDUCTION</scope>
</reference>
<reference key="3">
    <citation type="journal article" date="2010" name="Protein Expr. Purif.">
        <title>Over-expression and purification strategies for recombinant multi-protein oligomers: a case study of Mycobacterium tuberculosis sigma/anti-sigma factor protein complexes.</title>
        <authorList>
            <person name="Thakur K.G."/>
            <person name="Jaiswal R.K."/>
            <person name="Shukla J.K."/>
            <person name="Praveena T."/>
            <person name="Gopal B."/>
        </authorList>
    </citation>
    <scope>INTERACTION WITH RSKA</scope>
</reference>
<reference key="4">
    <citation type="journal article" date="2011" name="Mol. Cell. Proteomics">
        <title>Proteogenomic analysis of Mycobacterium tuberculosis by high resolution mass spectrometry.</title>
        <authorList>
            <person name="Kelkar D.S."/>
            <person name="Kumar D."/>
            <person name="Kumar P."/>
            <person name="Balakrishnan L."/>
            <person name="Muthusamy B."/>
            <person name="Yadav A.K."/>
            <person name="Shrivastava P."/>
            <person name="Marimuthu A."/>
            <person name="Anand S."/>
            <person name="Sundaram H."/>
            <person name="Kingsbury R."/>
            <person name="Harsha H.C."/>
            <person name="Nair B."/>
            <person name="Prasad T.S."/>
            <person name="Chauhan D.S."/>
            <person name="Katoch K."/>
            <person name="Katoch V.M."/>
            <person name="Kumar P."/>
            <person name="Chaerkady R."/>
            <person name="Ramachandran S."/>
            <person name="Dash D."/>
            <person name="Pandey A."/>
        </authorList>
    </citation>
    <scope>IDENTIFICATION BY MASS SPECTROMETRY [LARGE SCALE ANALYSIS]</scope>
    <source>
        <strain>ATCC 25618 / H37Rv</strain>
    </source>
</reference>
<reference key="5">
    <citation type="submission" date="2013-01" db="PDB data bank">
        <title>Structure of extra-cytoplasmic function (ECF) sigma factor SigK in complex with its negative regulator RskA from Mycobacterium tuberculosis.</title>
        <authorList>
            <person name="Shukla J.K."/>
            <person name="Gopal B."/>
        </authorList>
    </citation>
    <scope>X-RAY CRYSTALLOGRAPHY (2.4 ANGSTROMS) IN COMPLEX WITH RSKA</scope>
    <scope>SUBUNIT</scope>
</reference>
<accession>P9WGH7</accession>
<accession>L0T3R3</accession>
<accession>O53730</accession>
<accession>Q7D9T3</accession>
<proteinExistence type="evidence at protein level"/>
<keyword id="KW-0002">3D-structure</keyword>
<keyword id="KW-0238">DNA-binding</keyword>
<keyword id="KW-1185">Reference proteome</keyword>
<keyword id="KW-0731">Sigma factor</keyword>
<keyword id="KW-0804">Transcription</keyword>
<keyword id="KW-0805">Transcription regulation</keyword>